<gene>
    <name type="primary">PLA2G1B</name>
    <name type="synonym">PLA2</name>
    <name type="synonym">PLA2A</name>
    <name type="synonym">PPLA2</name>
</gene>
<sequence length="148" mass="16360">MKLLVLAVLLTVAAADSGISPRAVWQFRKMIKCVIPGSDPFLEYNNYGCYCGLGGSGTPVDELDKCCQTHDNCYDQAKKLDSCKFLLDNPYTHTYSYSCSGSAITCSSKNKECEAFICNCDRNAAICFSKAPYNKAHKNLDTKKYCQS</sequence>
<protein>
    <recommendedName>
        <fullName>Phospholipase A2</fullName>
        <ecNumber evidence="6 8">3.1.1.4</ecNumber>
    </recommendedName>
    <alternativeName>
        <fullName>Group IB phospholipase A2</fullName>
    </alternativeName>
    <alternativeName>
        <fullName>Phosphatidylcholine 2-acylhydrolase 1B</fullName>
    </alternativeName>
</protein>
<keyword id="KW-0002">3D-structure</keyword>
<keyword id="KW-0068">Autocatalytic cleavage</keyword>
<keyword id="KW-0106">Calcium</keyword>
<keyword id="KW-0903">Direct protein sequencing</keyword>
<keyword id="KW-1015">Disulfide bond</keyword>
<keyword id="KW-0378">Hydrolase</keyword>
<keyword id="KW-0443">Lipid metabolism</keyword>
<keyword id="KW-0479">Metal-binding</keyword>
<keyword id="KW-1208">Phospholipid metabolism</keyword>
<keyword id="KW-1267">Proteomics identification</keyword>
<keyword id="KW-1185">Reference proteome</keyword>
<keyword id="KW-0964">Secreted</keyword>
<keyword id="KW-0732">Signal</keyword>
<keyword id="KW-0865">Zymogen</keyword>
<accession>P04054</accession>
<accession>B2R4H5</accession>
<accession>Q3KPI1</accession>
<name>PA21B_HUMAN</name>
<comment type="function">
    <text evidence="2 3 6 7 8 10 14">Secretory calcium-dependent phospholipase A2 that primarily targets dietary phospholipids in the intestinal tract (PubMed:10681567, PubMed:1420353, PubMed:17603006). Hydrolyzes the ester bond of the fatty acyl group attached at sn-2 position of phospholipids (phospholipase A2 activity) with preference for phosphatidylethanolamines and phosphatidylglycerols over phosphatidylcholines (PubMed:10681567, PubMed:1420353, PubMed:17603006). May play a role in the biosynthesis of N-acyl ethanolamines that regulate energy metabolism and inflammation in the intestinal tract. Hydrolyzes N-acyl phosphatidylethanolamines to N-acyl lysophosphatidylethanolamines, which are further cleaved by a lysophospholipase D to release N-acyl ethanolamines (By similarity). May act in an autocrine and paracrine manner (PubMed:25335547, PubMed:7721806). Upon binding to the PLA2R1 receptor can regulate podocyte survival and glomerular homeostasis (PubMed:25335547). Has anti-helminth activity in a process regulated by gut microbiota. Upon helminth infection of intestinal epithelia, directly affects phosphatidylethanolamine contents in the membrane of helminth larvae, likely controlling an array of phospholipid-mediated cellular processes such as membrane fusion and cell division while providing for better immune recognition, ultimately reducing larvae integrity and infectivity (By similarity).</text>
</comment>
<comment type="catalytic activity">
    <reaction evidence="4 5 6 8">
        <text>a 1,2-diacyl-sn-glycero-3-phosphocholine + H2O = a 1-acyl-sn-glycero-3-phosphocholine + a fatty acid + H(+)</text>
        <dbReference type="Rhea" id="RHEA:15801"/>
        <dbReference type="ChEBI" id="CHEBI:15377"/>
        <dbReference type="ChEBI" id="CHEBI:15378"/>
        <dbReference type="ChEBI" id="CHEBI:28868"/>
        <dbReference type="ChEBI" id="CHEBI:57643"/>
        <dbReference type="ChEBI" id="CHEBI:58168"/>
        <dbReference type="EC" id="3.1.1.4"/>
    </reaction>
</comment>
<comment type="catalytic activity">
    <reaction evidence="8">
        <text>1,2-ditetradecanoyl-sn-glycero-3-phosphocholine + H2O = 1-tetradecanoyl-sn-glycero-3-phosphocholine + tetradecanoate + H(+)</text>
        <dbReference type="Rhea" id="RHEA:54456"/>
        <dbReference type="ChEBI" id="CHEBI:15377"/>
        <dbReference type="ChEBI" id="CHEBI:15378"/>
        <dbReference type="ChEBI" id="CHEBI:30807"/>
        <dbReference type="ChEBI" id="CHEBI:45240"/>
        <dbReference type="ChEBI" id="CHEBI:64489"/>
    </reaction>
</comment>
<comment type="catalytic activity">
    <reaction evidence="2">
        <text>1,2-dihexadecanoyl-sn-glycero-3-phosphocholine + H2O = 1-hexadecanoyl-sn-glycero-3-phosphocholine + hexadecanoate + H(+)</text>
        <dbReference type="Rhea" id="RHEA:41223"/>
        <dbReference type="ChEBI" id="CHEBI:7896"/>
        <dbReference type="ChEBI" id="CHEBI:15377"/>
        <dbReference type="ChEBI" id="CHEBI:15378"/>
        <dbReference type="ChEBI" id="CHEBI:72998"/>
        <dbReference type="ChEBI" id="CHEBI:72999"/>
    </reaction>
    <physiologicalReaction direction="left-to-right" evidence="2">
        <dbReference type="Rhea" id="RHEA:41224"/>
    </physiologicalReaction>
</comment>
<comment type="catalytic activity">
    <reaction evidence="6">
        <text>1-hexadecanoyl-2-(9Z-octadecenoyl)-sn-glycero-3-phosphocholine + H2O = 1-hexadecanoyl-sn-glycero-3-phosphocholine + (9Z)-octadecenoate + H(+)</text>
        <dbReference type="Rhea" id="RHEA:38779"/>
        <dbReference type="ChEBI" id="CHEBI:15377"/>
        <dbReference type="ChEBI" id="CHEBI:15378"/>
        <dbReference type="ChEBI" id="CHEBI:30823"/>
        <dbReference type="ChEBI" id="CHEBI:72998"/>
        <dbReference type="ChEBI" id="CHEBI:73001"/>
    </reaction>
    <physiologicalReaction direction="left-to-right" evidence="16">
        <dbReference type="Rhea" id="RHEA:38780"/>
    </physiologicalReaction>
</comment>
<comment type="catalytic activity">
    <reaction evidence="2">
        <text>1-hexadecanoyl-2-(5Z,8Z,11Z,14Z-eicosatetraenoyl)-sn-glycero-3-phosphocholine + H2O = 1-hexadecanoyl-sn-glycero-3-phosphocholine + (5Z,8Z,11Z,14Z)-eicosatetraenoate + H(+)</text>
        <dbReference type="Rhea" id="RHEA:40427"/>
        <dbReference type="ChEBI" id="CHEBI:15377"/>
        <dbReference type="ChEBI" id="CHEBI:15378"/>
        <dbReference type="ChEBI" id="CHEBI:32395"/>
        <dbReference type="ChEBI" id="CHEBI:72998"/>
        <dbReference type="ChEBI" id="CHEBI:73003"/>
    </reaction>
    <physiologicalReaction direction="left-to-right" evidence="2">
        <dbReference type="Rhea" id="RHEA:40428"/>
    </physiologicalReaction>
</comment>
<comment type="catalytic activity">
    <reaction evidence="7">
        <text>1-hexadecanoyl-2-(9Z-octadecenoyl)-sn-glycero-3-phospho-(1'-sn-glycerol) + H2O = 1-hexadecanoyl-sn-glycero-3-phospho-(1'-sn-glycerol) + (9Z)-octadecenoate + H(+)</text>
        <dbReference type="Rhea" id="RHEA:40919"/>
        <dbReference type="ChEBI" id="CHEBI:15377"/>
        <dbReference type="ChEBI" id="CHEBI:15378"/>
        <dbReference type="ChEBI" id="CHEBI:30823"/>
        <dbReference type="ChEBI" id="CHEBI:72841"/>
        <dbReference type="ChEBI" id="CHEBI:75158"/>
    </reaction>
    <physiologicalReaction direction="left-to-right" evidence="17">
        <dbReference type="Rhea" id="RHEA:40920"/>
    </physiologicalReaction>
</comment>
<comment type="catalytic activity">
    <reaction evidence="2">
        <text>N-hexadecanoyl-1,2-di-(9Z-octadecenoyl)-sn-glycero-3-phosphoethanolamine + H2O = N-hexadecanoyl-1-(9Z-octadecenoyl)-sn-glycero-3-phosphoethanolamine + (9Z)-octadecenoate + H(+)</text>
        <dbReference type="Rhea" id="RHEA:45424"/>
        <dbReference type="ChEBI" id="CHEBI:15377"/>
        <dbReference type="ChEBI" id="CHEBI:15378"/>
        <dbReference type="ChEBI" id="CHEBI:30823"/>
        <dbReference type="ChEBI" id="CHEBI:78097"/>
        <dbReference type="ChEBI" id="CHEBI:85217"/>
    </reaction>
    <physiologicalReaction direction="left-to-right" evidence="2">
        <dbReference type="Rhea" id="RHEA:45425"/>
    </physiologicalReaction>
</comment>
<comment type="catalytic activity">
    <reaction evidence="2">
        <text>1-hexadecanoyl-2-(9Z,12Z-octadecadienoyl)-sn-glycero-3-phosphoethanolamine + H2O = 1-hexadecanoyl-sn-glycero-3-phosphoethanolamine + (9Z,12Z)-octadecadienoate + H(+)</text>
        <dbReference type="Rhea" id="RHEA:40815"/>
        <dbReference type="ChEBI" id="CHEBI:15377"/>
        <dbReference type="ChEBI" id="CHEBI:15378"/>
        <dbReference type="ChEBI" id="CHEBI:30245"/>
        <dbReference type="ChEBI" id="CHEBI:73004"/>
        <dbReference type="ChEBI" id="CHEBI:73008"/>
    </reaction>
    <physiologicalReaction direction="left-to-right" evidence="2">
        <dbReference type="Rhea" id="RHEA:40816"/>
    </physiologicalReaction>
</comment>
<comment type="catalytic activity">
    <reaction evidence="2">
        <text>N,1-dihexadecanoyl-2-(9Z,12Z-octadecadienoyl)-sn-glycero-3-phosphoethanolamine + H2O = N,1-dihexadecanoyl-sn-glycero-3-phosphoethanolamine + (9Z,12Z)-octadecadienoate + H(+)</text>
        <dbReference type="Rhea" id="RHEA:56424"/>
        <dbReference type="ChEBI" id="CHEBI:15377"/>
        <dbReference type="ChEBI" id="CHEBI:15378"/>
        <dbReference type="ChEBI" id="CHEBI:30245"/>
        <dbReference type="ChEBI" id="CHEBI:85334"/>
        <dbReference type="ChEBI" id="CHEBI:85335"/>
    </reaction>
    <physiologicalReaction direction="left-to-right" evidence="2">
        <dbReference type="Rhea" id="RHEA:56425"/>
    </physiologicalReaction>
</comment>
<comment type="cofactor">
    <cofactor evidence="1">
        <name>Ca(2+)</name>
        <dbReference type="ChEBI" id="CHEBI:29108"/>
    </cofactor>
    <text evidence="1">Binds 1 Ca(2+) ion per subunit.</text>
</comment>
<comment type="activity regulation">
    <text evidence="8">Regulated by bile acid salts. Up-regulated by cholate and down-regulated by taurochenodeoxycholate. Cholate-activated rate of hydrolysis is lowered by hypolipidemic drug ezetimibe.</text>
</comment>
<comment type="subunit">
    <text evidence="9 14">The inactive pro-form is a homotrimer (PubMed:19297324). When anchored into the cell membrane, the inactive homotrimer is likely cleaved either by trypsin or by itself, producing an active trimer. The resulting conformational changes are thought to open up a center hole forming a channel for substrate entry (PubMed:19297324). Interacts with PLA2R1; this interaction mediates intracellular signaling as well as clearance of extracellular PLA2G1B via endocytotic pathway (PubMed:7721806).</text>
</comment>
<comment type="subcellular location">
    <subcellularLocation>
        <location evidence="9">Secreted</location>
    </subcellularLocation>
    <text>Secreted from pancreatic acinar cells in its inactive form.</text>
</comment>
<comment type="tissue specificity">
    <text evidence="6">Selectively expressed in pancreas, lung, liver and kidney. Also detected at lower levels in ovary and testis.</text>
</comment>
<comment type="PTM">
    <text evidence="9 12">Activated by trypsin cleavage in the duodenum. Can also be activated by thrombin or autocatalytically.</text>
</comment>
<comment type="similarity">
    <text evidence="15">Belongs to the phospholipase A2 family.</text>
</comment>
<dbReference type="EC" id="3.1.1.4" evidence="6 8"/>
<dbReference type="EMBL" id="M21056">
    <property type="protein sequence ID" value="AAA60107.1"/>
    <property type="molecule type" value="Genomic_DNA"/>
</dbReference>
<dbReference type="EMBL" id="M22970">
    <property type="protein sequence ID" value="AAA60107.1"/>
    <property type="status" value="JOINED"/>
    <property type="molecule type" value="Genomic_DNA"/>
</dbReference>
<dbReference type="EMBL" id="M21054">
    <property type="protein sequence ID" value="AAA36450.1"/>
    <property type="molecule type" value="mRNA"/>
</dbReference>
<dbReference type="EMBL" id="AK311830">
    <property type="protein sequence ID" value="BAG34772.1"/>
    <property type="molecule type" value="mRNA"/>
</dbReference>
<dbReference type="EMBL" id="AY438977">
    <property type="protein sequence ID" value="AAR05441.1"/>
    <property type="molecule type" value="Genomic_DNA"/>
</dbReference>
<dbReference type="EMBL" id="AC003982">
    <property type="protein sequence ID" value="AAB95635.1"/>
    <property type="molecule type" value="Genomic_DNA"/>
</dbReference>
<dbReference type="EMBL" id="CH471054">
    <property type="protein sequence ID" value="EAW98184.1"/>
    <property type="molecule type" value="Genomic_DNA"/>
</dbReference>
<dbReference type="EMBL" id="BC106725">
    <property type="protein sequence ID" value="AAI06726.1"/>
    <property type="molecule type" value="mRNA"/>
</dbReference>
<dbReference type="EMBL" id="BC106726">
    <property type="protein sequence ID" value="AAI06727.1"/>
    <property type="molecule type" value="mRNA"/>
</dbReference>
<dbReference type="CCDS" id="CCDS9195.1"/>
<dbReference type="PIR" id="C25793">
    <property type="entry name" value="PSHU"/>
</dbReference>
<dbReference type="RefSeq" id="NP_000919.1">
    <property type="nucleotide sequence ID" value="NM_000928.3"/>
</dbReference>
<dbReference type="PDB" id="3ELO">
    <property type="method" value="X-ray"/>
    <property type="resolution" value="1.55 A"/>
    <property type="chains" value="A=16-148"/>
</dbReference>
<dbReference type="PDB" id="6Q42">
    <property type="method" value="X-ray"/>
    <property type="resolution" value="1.90 A"/>
    <property type="chains" value="A/B=23-148"/>
</dbReference>
<dbReference type="PDBsum" id="3ELO"/>
<dbReference type="PDBsum" id="6Q42"/>
<dbReference type="SMR" id="P04054"/>
<dbReference type="BioGRID" id="111336">
    <property type="interactions" value="8"/>
</dbReference>
<dbReference type="FunCoup" id="P04054">
    <property type="interactions" value="513"/>
</dbReference>
<dbReference type="IntAct" id="P04054">
    <property type="interactions" value="4"/>
</dbReference>
<dbReference type="STRING" id="9606.ENSP00000312286"/>
<dbReference type="BindingDB" id="P04054"/>
<dbReference type="ChEMBL" id="CHEMBL4426"/>
<dbReference type="DrugBank" id="DB07836">
    <property type="generic name" value="1-DECYL-3-TRIFLUORO ETHYL-SN-GLYCERO-2-PHOSPHOMETHANOL"/>
</dbReference>
<dbReference type="DrugBank" id="DB03565">
    <property type="generic name" value="1-O-Octyl-2-Heptylphosphonyl-Sn-Glycero-3-Phosphoethanolamine"/>
</dbReference>
<dbReference type="DrugBank" id="DB14511">
    <property type="generic name" value="Acetate"/>
</dbReference>
<dbReference type="DrugBank" id="DB00972">
    <property type="generic name" value="Azelastine"/>
</dbReference>
<dbReference type="DrugBank" id="DB02659">
    <property type="generic name" value="Cholic Acid"/>
</dbReference>
<dbReference type="DrugBank" id="DB11750">
    <property type="generic name" value="Clobetasol"/>
</dbReference>
<dbReference type="DrugBank" id="DB00838">
    <property type="generic name" value="Clocortolone"/>
</dbReference>
<dbReference type="DrugBank" id="DB06311">
    <property type="generic name" value="Darapladib"/>
</dbReference>
<dbReference type="DrugBank" id="DB00223">
    <property type="generic name" value="Diflorasone"/>
</dbReference>
<dbReference type="DrugBank" id="DB00591">
    <property type="generic name" value="Fluocinolone acetonide"/>
</dbReference>
<dbReference type="DrugBank" id="DB02938">
    <property type="generic name" value="Heptanoic acid"/>
</dbReference>
<dbReference type="DrugBank" id="DB02210">
    <property type="generic name" value="Hexane-1,6-Diol"/>
</dbReference>
<dbReference type="DrugBank" id="DB03633">
    <property type="generic name" value="Lpc-Ether"/>
</dbReference>
<dbReference type="DrugBank" id="DB14009">
    <property type="generic name" value="Medical Cannabis"/>
</dbReference>
<dbReference type="DrugBank" id="DB09031">
    <property type="generic name" value="Miltefosine"/>
</dbReference>
<dbReference type="DrugBank" id="DB02448">
    <property type="generic name" value="N-Tridecanoic Acid"/>
</dbReference>
<dbReference type="DrugBank" id="DB04552">
    <property type="generic name" value="Niflumic acid"/>
</dbReference>
<dbReference type="DrugBank" id="DB02795">
    <property type="generic name" value="P-Anisic Acid"/>
</dbReference>
<dbReference type="DrugBank" id="DB07657">
    <property type="generic name" value="PHOSPHONIC ACID 2-DODECANOYLAMINO-HEXYL ESTER PROPYL ESTER"/>
</dbReference>
<dbReference type="DrugBank" id="DB03587">
    <property type="generic name" value="Pyruvaldehyde"/>
</dbReference>
<dbReference type="DrugBank" id="DB01103">
    <property type="generic name" value="Quinacrine"/>
</dbReference>
<dbReference type="DrugBank" id="DB05119">
    <property type="generic name" value="Rilapladib"/>
</dbReference>
<dbReference type="DrugBank" id="DB00795">
    <property type="generic name" value="Sulfasalazine"/>
</dbReference>
<dbReference type="DrugBank" id="DB15588">
    <property type="generic name" value="Ursolic acid"/>
</dbReference>
<dbReference type="DrugBank" id="DB11909">
    <property type="generic name" value="Varespladib"/>
</dbReference>
<dbReference type="DrugCentral" id="P04054"/>
<dbReference type="GuidetoPHARMACOLOGY" id="1416"/>
<dbReference type="SwissLipids" id="SLP:000001083"/>
<dbReference type="BioMuta" id="PLA2G1B"/>
<dbReference type="DMDM" id="129404"/>
<dbReference type="MassIVE" id="P04054"/>
<dbReference type="PaxDb" id="9606-ENSP00000312286"/>
<dbReference type="PeptideAtlas" id="P04054"/>
<dbReference type="ProteomicsDB" id="51641"/>
<dbReference type="Antibodypedia" id="31466">
    <property type="antibodies" value="334 antibodies from 38 providers"/>
</dbReference>
<dbReference type="DNASU" id="5319"/>
<dbReference type="Ensembl" id="ENST00000308366.9">
    <property type="protein sequence ID" value="ENSP00000312286.4"/>
    <property type="gene ID" value="ENSG00000170890.14"/>
</dbReference>
<dbReference type="GeneID" id="5319"/>
<dbReference type="KEGG" id="hsa:5319"/>
<dbReference type="MANE-Select" id="ENST00000308366.9">
    <property type="protein sequence ID" value="ENSP00000312286.4"/>
    <property type="RefSeq nucleotide sequence ID" value="NM_000928.3"/>
    <property type="RefSeq protein sequence ID" value="NP_000919.1"/>
</dbReference>
<dbReference type="UCSC" id="uc001tyd.3">
    <property type="organism name" value="human"/>
</dbReference>
<dbReference type="AGR" id="HGNC:9030"/>
<dbReference type="CTD" id="5319"/>
<dbReference type="DisGeNET" id="5319"/>
<dbReference type="GeneCards" id="PLA2G1B"/>
<dbReference type="HGNC" id="HGNC:9030">
    <property type="gene designation" value="PLA2G1B"/>
</dbReference>
<dbReference type="HPA" id="ENSG00000170890">
    <property type="expression patterns" value="Tissue enriched (pancreas)"/>
</dbReference>
<dbReference type="MIM" id="172410">
    <property type="type" value="gene"/>
</dbReference>
<dbReference type="neXtProt" id="NX_P04054"/>
<dbReference type="OpenTargets" id="ENSG00000170890"/>
<dbReference type="PharmGKB" id="PA33361"/>
<dbReference type="VEuPathDB" id="HostDB:ENSG00000170890"/>
<dbReference type="eggNOG" id="KOG4087">
    <property type="taxonomic scope" value="Eukaryota"/>
</dbReference>
<dbReference type="GeneTree" id="ENSGT00940000154885"/>
<dbReference type="InParanoid" id="P04054"/>
<dbReference type="OMA" id="CEAFLCN"/>
<dbReference type="OrthoDB" id="5841574at2759"/>
<dbReference type="PAN-GO" id="P04054">
    <property type="GO annotations" value="3 GO annotations based on evolutionary models"/>
</dbReference>
<dbReference type="PhylomeDB" id="P04054"/>
<dbReference type="TreeFam" id="TF319283"/>
<dbReference type="BioCyc" id="MetaCyc:HS10199-MONOMER"/>
<dbReference type="PathwayCommons" id="P04054"/>
<dbReference type="Reactome" id="R-HSA-1482788">
    <property type="pathway name" value="Acyl chain remodelling of PC"/>
</dbReference>
<dbReference type="Reactome" id="R-HSA-1482801">
    <property type="pathway name" value="Acyl chain remodelling of PS"/>
</dbReference>
<dbReference type="Reactome" id="R-HSA-1482839">
    <property type="pathway name" value="Acyl chain remodelling of PE"/>
</dbReference>
<dbReference type="Reactome" id="R-HSA-1482922">
    <property type="pathway name" value="Acyl chain remodelling of PI"/>
</dbReference>
<dbReference type="Reactome" id="R-HSA-1482925">
    <property type="pathway name" value="Acyl chain remodelling of PG"/>
</dbReference>
<dbReference type="Reactome" id="R-HSA-1483166">
    <property type="pathway name" value="Synthesis of PA"/>
</dbReference>
<dbReference type="Reactome" id="R-HSA-9925561">
    <property type="pathway name" value="Developmental Lineage of Pancreatic Acinar Cells"/>
</dbReference>
<dbReference type="SignaLink" id="P04054"/>
<dbReference type="SIGNOR" id="P04054"/>
<dbReference type="BioGRID-ORCS" id="5319">
    <property type="hits" value="41 hits in 1160 CRISPR screens"/>
</dbReference>
<dbReference type="ChiTaRS" id="PLA2G1B">
    <property type="organism name" value="human"/>
</dbReference>
<dbReference type="EvolutionaryTrace" id="P04054"/>
<dbReference type="GeneWiki" id="PLA2G1B"/>
<dbReference type="GenomeRNAi" id="5319"/>
<dbReference type="Pharos" id="P04054">
    <property type="development level" value="Tchem"/>
</dbReference>
<dbReference type="PRO" id="PR:P04054"/>
<dbReference type="Proteomes" id="UP000005640">
    <property type="component" value="Chromosome 12"/>
</dbReference>
<dbReference type="RNAct" id="P04054">
    <property type="molecule type" value="protein"/>
</dbReference>
<dbReference type="Bgee" id="ENSG00000170890">
    <property type="expression patterns" value="Expressed in body of pancreas and 104 other cell types or tissues"/>
</dbReference>
<dbReference type="ExpressionAtlas" id="P04054">
    <property type="expression patterns" value="baseline and differential"/>
</dbReference>
<dbReference type="GO" id="GO:0009986">
    <property type="term" value="C:cell surface"/>
    <property type="evidence" value="ECO:0000314"/>
    <property type="project" value="BHF-UCL"/>
</dbReference>
<dbReference type="GO" id="GO:0005576">
    <property type="term" value="C:extracellular region"/>
    <property type="evidence" value="ECO:0000304"/>
    <property type="project" value="Reactome"/>
</dbReference>
<dbReference type="GO" id="GO:0005615">
    <property type="term" value="C:extracellular space"/>
    <property type="evidence" value="ECO:0000314"/>
    <property type="project" value="UniProtKB"/>
</dbReference>
<dbReference type="GO" id="GO:0032052">
    <property type="term" value="F:bile acid binding"/>
    <property type="evidence" value="ECO:0000250"/>
    <property type="project" value="UniProtKB"/>
</dbReference>
<dbReference type="GO" id="GO:0005509">
    <property type="term" value="F:calcium ion binding"/>
    <property type="evidence" value="ECO:0000314"/>
    <property type="project" value="BHF-UCL"/>
</dbReference>
<dbReference type="GO" id="GO:0047498">
    <property type="term" value="F:calcium-dependent phospholipase A2 activity"/>
    <property type="evidence" value="ECO:0000314"/>
    <property type="project" value="UniProtKB"/>
</dbReference>
<dbReference type="GO" id="GO:0004623">
    <property type="term" value="F:phospholipase A2 activity"/>
    <property type="evidence" value="ECO:0000314"/>
    <property type="project" value="BHF-UCL"/>
</dbReference>
<dbReference type="GO" id="GO:0005543">
    <property type="term" value="F:phospholipid binding"/>
    <property type="evidence" value="ECO:0000318"/>
    <property type="project" value="GO_Central"/>
</dbReference>
<dbReference type="GO" id="GO:0005102">
    <property type="term" value="F:signaling receptor binding"/>
    <property type="evidence" value="ECO:0000314"/>
    <property type="project" value="BHF-UCL"/>
</dbReference>
<dbReference type="GO" id="GO:0007015">
    <property type="term" value="P:actin filament organization"/>
    <property type="evidence" value="ECO:0000304"/>
    <property type="project" value="ProtInc"/>
</dbReference>
<dbReference type="GO" id="GO:0019731">
    <property type="term" value="P:antibacterial humoral response"/>
    <property type="evidence" value="ECO:0000314"/>
    <property type="project" value="UniProtKB"/>
</dbReference>
<dbReference type="GO" id="GO:0061844">
    <property type="term" value="P:antimicrobial humoral immune response mediated by antimicrobial peptide"/>
    <property type="evidence" value="ECO:0000314"/>
    <property type="project" value="UniProtKB"/>
</dbReference>
<dbReference type="GO" id="GO:0050482">
    <property type="term" value="P:arachidonate secretion"/>
    <property type="evidence" value="ECO:0000304"/>
    <property type="project" value="BHF-UCL"/>
</dbReference>
<dbReference type="GO" id="GO:0032869">
    <property type="term" value="P:cellular response to insulin stimulus"/>
    <property type="evidence" value="ECO:0000250"/>
    <property type="project" value="BHF-UCL"/>
</dbReference>
<dbReference type="GO" id="GO:0050830">
    <property type="term" value="P:defense response to Gram-positive bacterium"/>
    <property type="evidence" value="ECO:0000314"/>
    <property type="project" value="UniProtKB"/>
</dbReference>
<dbReference type="GO" id="GO:0006633">
    <property type="term" value="P:fatty acid biosynthetic process"/>
    <property type="evidence" value="ECO:0000314"/>
    <property type="project" value="BHF-UCL"/>
</dbReference>
<dbReference type="GO" id="GO:0002227">
    <property type="term" value="P:innate immune response in mucosa"/>
    <property type="evidence" value="ECO:0000314"/>
    <property type="project" value="UniProtKB"/>
</dbReference>
<dbReference type="GO" id="GO:0035556">
    <property type="term" value="P:intracellular signal transduction"/>
    <property type="evidence" value="ECO:0000250"/>
    <property type="project" value="BHF-UCL"/>
</dbReference>
<dbReference type="GO" id="GO:0019370">
    <property type="term" value="P:leukotriene biosynthetic process"/>
    <property type="evidence" value="ECO:0000250"/>
    <property type="project" value="BHF-UCL"/>
</dbReference>
<dbReference type="GO" id="GO:0016042">
    <property type="term" value="P:lipid catabolic process"/>
    <property type="evidence" value="ECO:0000314"/>
    <property type="project" value="BHF-UCL"/>
</dbReference>
<dbReference type="GO" id="GO:0030593">
    <property type="term" value="P:neutrophil chemotaxis"/>
    <property type="evidence" value="ECO:0000250"/>
    <property type="project" value="BHF-UCL"/>
</dbReference>
<dbReference type="GO" id="GO:0002446">
    <property type="term" value="P:neutrophil mediated immunity"/>
    <property type="evidence" value="ECO:0000250"/>
    <property type="project" value="BHF-UCL"/>
</dbReference>
<dbReference type="GO" id="GO:0046470">
    <property type="term" value="P:phosphatidylcholine metabolic process"/>
    <property type="evidence" value="ECO:0000314"/>
    <property type="project" value="UniProtKB"/>
</dbReference>
<dbReference type="GO" id="GO:0046471">
    <property type="term" value="P:phosphatidylglycerol metabolic process"/>
    <property type="evidence" value="ECO:0000314"/>
    <property type="project" value="UniProtKB"/>
</dbReference>
<dbReference type="GO" id="GO:0010524">
    <property type="term" value="P:positive regulation of calcium ion transport into cytosol"/>
    <property type="evidence" value="ECO:0000250"/>
    <property type="project" value="BHF-UCL"/>
</dbReference>
<dbReference type="GO" id="GO:0008284">
    <property type="term" value="P:positive regulation of cell population proliferation"/>
    <property type="evidence" value="ECO:0000314"/>
    <property type="project" value="BHF-UCL"/>
</dbReference>
<dbReference type="GO" id="GO:0048146">
    <property type="term" value="P:positive regulation of fibroblast proliferation"/>
    <property type="evidence" value="ECO:0000314"/>
    <property type="project" value="BHF-UCL"/>
</dbReference>
<dbReference type="GO" id="GO:0050778">
    <property type="term" value="P:positive regulation of immune response"/>
    <property type="evidence" value="ECO:0000250"/>
    <property type="project" value="BHF-UCL"/>
</dbReference>
<dbReference type="GO" id="GO:0032757">
    <property type="term" value="P:positive regulation of interleukin-8 production"/>
    <property type="evidence" value="ECO:0000250"/>
    <property type="project" value="BHF-UCL"/>
</dbReference>
<dbReference type="GO" id="GO:0043410">
    <property type="term" value="P:positive regulation of MAPK cascade"/>
    <property type="evidence" value="ECO:0000250"/>
    <property type="project" value="BHF-UCL"/>
</dbReference>
<dbReference type="GO" id="GO:1904635">
    <property type="term" value="P:positive regulation of podocyte apoptotic process"/>
    <property type="evidence" value="ECO:0000314"/>
    <property type="project" value="UniProtKB"/>
</dbReference>
<dbReference type="GO" id="GO:0050714">
    <property type="term" value="P:positive regulation of protein secretion"/>
    <property type="evidence" value="ECO:0000304"/>
    <property type="project" value="BHF-UCL"/>
</dbReference>
<dbReference type="GO" id="GO:0045944">
    <property type="term" value="P:positive regulation of transcription by RNA polymerase II"/>
    <property type="evidence" value="ECO:0000250"/>
    <property type="project" value="BHF-UCL"/>
</dbReference>
<dbReference type="GO" id="GO:0046324">
    <property type="term" value="P:regulation of D-glucose import"/>
    <property type="evidence" value="ECO:0000250"/>
    <property type="project" value="BHF-UCL"/>
</dbReference>
<dbReference type="GO" id="GO:0007165">
    <property type="term" value="P:signal transduction"/>
    <property type="evidence" value="ECO:0000304"/>
    <property type="project" value="ProtInc"/>
</dbReference>
<dbReference type="CDD" id="cd00125">
    <property type="entry name" value="PLA2c"/>
    <property type="match status" value="1"/>
</dbReference>
<dbReference type="FunFam" id="1.20.90.10:FF:000011">
    <property type="entry name" value="Phospholipase A(2)"/>
    <property type="match status" value="1"/>
</dbReference>
<dbReference type="Gene3D" id="1.20.90.10">
    <property type="entry name" value="Phospholipase A2 domain"/>
    <property type="match status" value="1"/>
</dbReference>
<dbReference type="InterPro" id="IPR001211">
    <property type="entry name" value="PLipase_A2"/>
</dbReference>
<dbReference type="InterPro" id="IPR033112">
    <property type="entry name" value="PLipase_A2_Asp_AS"/>
</dbReference>
<dbReference type="InterPro" id="IPR016090">
    <property type="entry name" value="PLipase_A2_dom"/>
</dbReference>
<dbReference type="InterPro" id="IPR036444">
    <property type="entry name" value="PLipase_A2_dom_sf"/>
</dbReference>
<dbReference type="InterPro" id="IPR033113">
    <property type="entry name" value="PLipase_A2_His_AS"/>
</dbReference>
<dbReference type="PANTHER" id="PTHR11716:SF94">
    <property type="entry name" value="PHOSPHOLIPASE A2"/>
    <property type="match status" value="1"/>
</dbReference>
<dbReference type="PANTHER" id="PTHR11716">
    <property type="entry name" value="PHOSPHOLIPASE A2 FAMILY MEMBER"/>
    <property type="match status" value="1"/>
</dbReference>
<dbReference type="Pfam" id="PF00068">
    <property type="entry name" value="Phospholip_A2_1"/>
    <property type="match status" value="1"/>
</dbReference>
<dbReference type="PRINTS" id="PR00389">
    <property type="entry name" value="PHPHLIPASEA2"/>
</dbReference>
<dbReference type="SMART" id="SM00085">
    <property type="entry name" value="PA2c"/>
    <property type="match status" value="1"/>
</dbReference>
<dbReference type="SUPFAM" id="SSF48619">
    <property type="entry name" value="Phospholipase A2, PLA2"/>
    <property type="match status" value="1"/>
</dbReference>
<dbReference type="PROSITE" id="PS00119">
    <property type="entry name" value="PA2_ASP"/>
    <property type="match status" value="1"/>
</dbReference>
<dbReference type="PROSITE" id="PS00118">
    <property type="entry name" value="PA2_HIS"/>
    <property type="match status" value="1"/>
</dbReference>
<proteinExistence type="evidence at protein level"/>
<feature type="signal peptide" evidence="13">
    <location>
        <begin position="1"/>
        <end position="15"/>
    </location>
</feature>
<feature type="propeptide" id="PRO_0000022739" description="Activation peptide" evidence="12">
    <location>
        <begin position="16"/>
        <end position="22"/>
    </location>
</feature>
<feature type="chain" id="PRO_0000022740" description="Phospholipase A2" evidence="11">
    <location>
        <begin position="23"/>
        <end position="148"/>
    </location>
</feature>
<feature type="active site" evidence="1">
    <location>
        <position position="70"/>
    </location>
</feature>
<feature type="active site" evidence="1">
    <location>
        <position position="121"/>
    </location>
</feature>
<feature type="binding site" evidence="1">
    <location>
        <position position="50"/>
    </location>
    <ligand>
        <name>Ca(2+)</name>
        <dbReference type="ChEBI" id="CHEBI:29108"/>
    </ligand>
</feature>
<feature type="binding site" evidence="1">
    <location>
        <position position="52"/>
    </location>
    <ligand>
        <name>Ca(2+)</name>
        <dbReference type="ChEBI" id="CHEBI:29108"/>
    </ligand>
</feature>
<feature type="binding site" evidence="1">
    <location>
        <position position="54"/>
    </location>
    <ligand>
        <name>Ca(2+)</name>
        <dbReference type="ChEBI" id="CHEBI:29108"/>
    </ligand>
</feature>
<feature type="binding site" evidence="1">
    <location>
        <position position="71"/>
    </location>
    <ligand>
        <name>Ca(2+)</name>
        <dbReference type="ChEBI" id="CHEBI:29108"/>
    </ligand>
</feature>
<feature type="disulfide bond" evidence="9">
    <location>
        <begin position="33"/>
        <end position="99"/>
    </location>
</feature>
<feature type="disulfide bond" evidence="9">
    <location>
        <begin position="49"/>
        <end position="146"/>
    </location>
</feature>
<feature type="disulfide bond" evidence="9">
    <location>
        <begin position="51"/>
        <end position="67"/>
    </location>
</feature>
<feature type="disulfide bond" evidence="9">
    <location>
        <begin position="66"/>
        <end position="127"/>
    </location>
</feature>
<feature type="disulfide bond" evidence="9">
    <location>
        <begin position="73"/>
        <end position="120"/>
    </location>
</feature>
<feature type="disulfide bond" evidence="9">
    <location>
        <begin position="83"/>
        <end position="113"/>
    </location>
</feature>
<feature type="disulfide bond" evidence="9">
    <location>
        <begin position="106"/>
        <end position="118"/>
    </location>
</feature>
<feature type="sequence variant" id="VAR_011911" description="In dbSNP:rs5632.">
    <original>D</original>
    <variation>A</variation>
    <location>
        <position position="16"/>
    </location>
</feature>
<feature type="sequence variant" id="VAR_011913" description="In dbSNP:rs5636.">
    <original>N</original>
    <variation>K</variation>
    <location>
        <position position="89"/>
    </location>
</feature>
<feature type="sequence variant" id="VAR_011912" description="In dbSNP:rs5635.">
    <original>N</original>
    <variation>T</variation>
    <location>
        <position position="89"/>
    </location>
</feature>
<feature type="sequence conflict" description="In Ref. 8; AA sequence." evidence="15" ref="8">
    <location>
        <position position="144"/>
    </location>
</feature>
<feature type="helix" evidence="18">
    <location>
        <begin position="21"/>
        <end position="23"/>
    </location>
</feature>
<feature type="helix" evidence="18">
    <location>
        <begin position="25"/>
        <end position="30"/>
    </location>
</feature>
<feature type="helix" evidence="18">
    <location>
        <begin position="31"/>
        <end position="33"/>
    </location>
</feature>
<feature type="helix" evidence="18">
    <location>
        <begin position="40"/>
        <end position="44"/>
    </location>
</feature>
<feature type="strand" evidence="18">
    <location>
        <begin position="45"/>
        <end position="47"/>
    </location>
</feature>
<feature type="turn" evidence="18">
    <location>
        <begin position="48"/>
        <end position="50"/>
    </location>
</feature>
<feature type="strand" evidence="18">
    <location>
        <begin position="51"/>
        <end position="54"/>
    </location>
</feature>
<feature type="helix" evidence="18">
    <location>
        <begin position="62"/>
        <end position="77"/>
    </location>
</feature>
<feature type="helix" evidence="18">
    <location>
        <begin position="81"/>
        <end position="83"/>
    </location>
</feature>
<feature type="turn" evidence="18">
    <location>
        <begin position="84"/>
        <end position="87"/>
    </location>
</feature>
<feature type="turn" evidence="19">
    <location>
        <begin position="90"/>
        <end position="92"/>
    </location>
</feature>
<feature type="strand" evidence="18">
    <location>
        <begin position="97"/>
        <end position="100"/>
    </location>
</feature>
<feature type="strand" evidence="18">
    <location>
        <begin position="103"/>
        <end position="106"/>
    </location>
</feature>
<feature type="helix" evidence="18">
    <location>
        <begin position="112"/>
        <end position="130"/>
    </location>
</feature>
<feature type="helix" evidence="18">
    <location>
        <begin position="135"/>
        <end position="137"/>
    </location>
</feature>
<feature type="helix" evidence="18">
    <location>
        <begin position="142"/>
        <end position="145"/>
    </location>
</feature>
<evidence type="ECO:0000250" key="1">
    <source>
        <dbReference type="UniProtKB" id="P00593"/>
    </source>
</evidence>
<evidence type="ECO:0000250" key="2">
    <source>
        <dbReference type="UniProtKB" id="P04055"/>
    </source>
</evidence>
<evidence type="ECO:0000250" key="3">
    <source>
        <dbReference type="UniProtKB" id="Q9Z0Y2"/>
    </source>
</evidence>
<evidence type="ECO:0000255" key="4">
    <source>
        <dbReference type="PROSITE-ProRule" id="PRU10035"/>
    </source>
</evidence>
<evidence type="ECO:0000255" key="5">
    <source>
        <dbReference type="PROSITE-ProRule" id="PRU10036"/>
    </source>
</evidence>
<evidence type="ECO:0000269" key="6">
    <source>
    </source>
</evidence>
<evidence type="ECO:0000269" key="7">
    <source>
    </source>
</evidence>
<evidence type="ECO:0000269" key="8">
    <source>
    </source>
</evidence>
<evidence type="ECO:0000269" key="9">
    <source>
    </source>
</evidence>
<evidence type="ECO:0000269" key="10">
    <source>
    </source>
</evidence>
<evidence type="ECO:0000269" key="11">
    <source>
    </source>
</evidence>
<evidence type="ECO:0000269" key="12">
    <source>
    </source>
</evidence>
<evidence type="ECO:0000269" key="13">
    <source>
    </source>
</evidence>
<evidence type="ECO:0000269" key="14">
    <source>
    </source>
</evidence>
<evidence type="ECO:0000305" key="15"/>
<evidence type="ECO:0000305" key="16">
    <source>
    </source>
</evidence>
<evidence type="ECO:0000305" key="17">
    <source>
    </source>
</evidence>
<evidence type="ECO:0007829" key="18">
    <source>
        <dbReference type="PDB" id="3ELO"/>
    </source>
</evidence>
<evidence type="ECO:0007829" key="19">
    <source>
        <dbReference type="PDB" id="6Q42"/>
    </source>
</evidence>
<organism>
    <name type="scientific">Homo sapiens</name>
    <name type="common">Human</name>
    <dbReference type="NCBI Taxonomy" id="9606"/>
    <lineage>
        <taxon>Eukaryota</taxon>
        <taxon>Metazoa</taxon>
        <taxon>Chordata</taxon>
        <taxon>Craniata</taxon>
        <taxon>Vertebrata</taxon>
        <taxon>Euteleostomi</taxon>
        <taxon>Mammalia</taxon>
        <taxon>Eutheria</taxon>
        <taxon>Euarchontoglires</taxon>
        <taxon>Primates</taxon>
        <taxon>Haplorrhini</taxon>
        <taxon>Catarrhini</taxon>
        <taxon>Hominidae</taxon>
        <taxon>Homo</taxon>
    </lineage>
</organism>
<reference key="1">
    <citation type="journal article" date="1986" name="DNA">
        <title>Pancreatic phospholipase A2: isolation of the human gene and cDNAs from porcine pancreas and human lung.</title>
        <authorList>
            <person name="Seilhamer J.J."/>
            <person name="Randall T.L."/>
            <person name="Yamanaka M."/>
            <person name="Johnson L.K."/>
        </authorList>
    </citation>
    <scope>NUCLEOTIDE SEQUENCE [GENOMIC DNA / MRNA]</scope>
    <source>
        <tissue>Lung</tissue>
    </source>
</reference>
<reference key="2">
    <citation type="journal article" date="2004" name="Nat. Genet.">
        <title>Complete sequencing and characterization of 21,243 full-length human cDNAs.</title>
        <authorList>
            <person name="Ota T."/>
            <person name="Suzuki Y."/>
            <person name="Nishikawa T."/>
            <person name="Otsuki T."/>
            <person name="Sugiyama T."/>
            <person name="Irie R."/>
            <person name="Wakamatsu A."/>
            <person name="Hayashi K."/>
            <person name="Sato H."/>
            <person name="Nagai K."/>
            <person name="Kimura K."/>
            <person name="Makita H."/>
            <person name="Sekine M."/>
            <person name="Obayashi M."/>
            <person name="Nishi T."/>
            <person name="Shibahara T."/>
            <person name="Tanaka T."/>
            <person name="Ishii S."/>
            <person name="Yamamoto J."/>
            <person name="Saito K."/>
            <person name="Kawai Y."/>
            <person name="Isono Y."/>
            <person name="Nakamura Y."/>
            <person name="Nagahari K."/>
            <person name="Murakami K."/>
            <person name="Yasuda T."/>
            <person name="Iwayanagi T."/>
            <person name="Wagatsuma M."/>
            <person name="Shiratori A."/>
            <person name="Sudo H."/>
            <person name="Hosoiri T."/>
            <person name="Kaku Y."/>
            <person name="Kodaira H."/>
            <person name="Kondo H."/>
            <person name="Sugawara M."/>
            <person name="Takahashi M."/>
            <person name="Kanda K."/>
            <person name="Yokoi T."/>
            <person name="Furuya T."/>
            <person name="Kikkawa E."/>
            <person name="Omura Y."/>
            <person name="Abe K."/>
            <person name="Kamihara K."/>
            <person name="Katsuta N."/>
            <person name="Sato K."/>
            <person name="Tanikawa M."/>
            <person name="Yamazaki M."/>
            <person name="Ninomiya K."/>
            <person name="Ishibashi T."/>
            <person name="Yamashita H."/>
            <person name="Murakawa K."/>
            <person name="Fujimori K."/>
            <person name="Tanai H."/>
            <person name="Kimata M."/>
            <person name="Watanabe M."/>
            <person name="Hiraoka S."/>
            <person name="Chiba Y."/>
            <person name="Ishida S."/>
            <person name="Ono Y."/>
            <person name="Takiguchi S."/>
            <person name="Watanabe S."/>
            <person name="Yosida M."/>
            <person name="Hotuta T."/>
            <person name="Kusano J."/>
            <person name="Kanehori K."/>
            <person name="Takahashi-Fujii A."/>
            <person name="Hara H."/>
            <person name="Tanase T.-O."/>
            <person name="Nomura Y."/>
            <person name="Togiya S."/>
            <person name="Komai F."/>
            <person name="Hara R."/>
            <person name="Takeuchi K."/>
            <person name="Arita M."/>
            <person name="Imose N."/>
            <person name="Musashino K."/>
            <person name="Yuuki H."/>
            <person name="Oshima A."/>
            <person name="Sasaki N."/>
            <person name="Aotsuka S."/>
            <person name="Yoshikawa Y."/>
            <person name="Matsunawa H."/>
            <person name="Ichihara T."/>
            <person name="Shiohata N."/>
            <person name="Sano S."/>
            <person name="Moriya S."/>
            <person name="Momiyama H."/>
            <person name="Satoh N."/>
            <person name="Takami S."/>
            <person name="Terashima Y."/>
            <person name="Suzuki O."/>
            <person name="Nakagawa S."/>
            <person name="Senoh A."/>
            <person name="Mizoguchi H."/>
            <person name="Goto Y."/>
            <person name="Shimizu F."/>
            <person name="Wakebe H."/>
            <person name="Hishigaki H."/>
            <person name="Watanabe T."/>
            <person name="Sugiyama A."/>
            <person name="Takemoto M."/>
            <person name="Kawakami B."/>
            <person name="Yamazaki M."/>
            <person name="Watanabe K."/>
            <person name="Kumagai A."/>
            <person name="Itakura S."/>
            <person name="Fukuzumi Y."/>
            <person name="Fujimori Y."/>
            <person name="Komiyama M."/>
            <person name="Tashiro H."/>
            <person name="Tanigami A."/>
            <person name="Fujiwara T."/>
            <person name="Ono T."/>
            <person name="Yamada K."/>
            <person name="Fujii Y."/>
            <person name="Ozaki K."/>
            <person name="Hirao M."/>
            <person name="Ohmori Y."/>
            <person name="Kawabata A."/>
            <person name="Hikiji T."/>
            <person name="Kobatake N."/>
            <person name="Inagaki H."/>
            <person name="Ikema Y."/>
            <person name="Okamoto S."/>
            <person name="Okitani R."/>
            <person name="Kawakami T."/>
            <person name="Noguchi S."/>
            <person name="Itoh T."/>
            <person name="Shigeta K."/>
            <person name="Senba T."/>
            <person name="Matsumura K."/>
            <person name="Nakajima Y."/>
            <person name="Mizuno T."/>
            <person name="Morinaga M."/>
            <person name="Sasaki M."/>
            <person name="Togashi T."/>
            <person name="Oyama M."/>
            <person name="Hata H."/>
            <person name="Watanabe M."/>
            <person name="Komatsu T."/>
            <person name="Mizushima-Sugano J."/>
            <person name="Satoh T."/>
            <person name="Shirai Y."/>
            <person name="Takahashi Y."/>
            <person name="Nakagawa K."/>
            <person name="Okumura K."/>
            <person name="Nagase T."/>
            <person name="Nomura N."/>
            <person name="Kikuchi H."/>
            <person name="Masuho Y."/>
            <person name="Yamashita R."/>
            <person name="Nakai K."/>
            <person name="Yada T."/>
            <person name="Nakamura Y."/>
            <person name="Ohara O."/>
            <person name="Isogai T."/>
            <person name="Sugano S."/>
        </authorList>
    </citation>
    <scope>NUCLEOTIDE SEQUENCE [LARGE SCALE MRNA]</scope>
    <source>
        <tissue>Urinary bladder</tissue>
    </source>
</reference>
<reference key="3">
    <citation type="submission" date="2003-10" db="EMBL/GenBank/DDBJ databases">
        <authorList>
            <consortium name="NIEHS SNPs program"/>
        </authorList>
    </citation>
    <scope>NUCLEOTIDE SEQUENCE [GENOMIC DNA]</scope>
</reference>
<reference key="4">
    <citation type="journal article" date="2006" name="Nature">
        <title>The finished DNA sequence of human chromosome 12.</title>
        <authorList>
            <person name="Scherer S.E."/>
            <person name="Muzny D.M."/>
            <person name="Buhay C.J."/>
            <person name="Chen R."/>
            <person name="Cree A."/>
            <person name="Ding Y."/>
            <person name="Dugan-Rocha S."/>
            <person name="Gill R."/>
            <person name="Gunaratne P."/>
            <person name="Harris R.A."/>
            <person name="Hawes A.C."/>
            <person name="Hernandez J."/>
            <person name="Hodgson A.V."/>
            <person name="Hume J."/>
            <person name="Jackson A."/>
            <person name="Khan Z.M."/>
            <person name="Kovar-Smith C."/>
            <person name="Lewis L.R."/>
            <person name="Lozado R.J."/>
            <person name="Metzker M.L."/>
            <person name="Milosavljevic A."/>
            <person name="Miner G.R."/>
            <person name="Montgomery K.T."/>
            <person name="Morgan M.B."/>
            <person name="Nazareth L.V."/>
            <person name="Scott G."/>
            <person name="Sodergren E."/>
            <person name="Song X.-Z."/>
            <person name="Steffen D."/>
            <person name="Lovering R.C."/>
            <person name="Wheeler D.A."/>
            <person name="Worley K.C."/>
            <person name="Yuan Y."/>
            <person name="Zhang Z."/>
            <person name="Adams C.Q."/>
            <person name="Ansari-Lari M.A."/>
            <person name="Ayele M."/>
            <person name="Brown M.J."/>
            <person name="Chen G."/>
            <person name="Chen Z."/>
            <person name="Clerc-Blankenburg K.P."/>
            <person name="Davis C."/>
            <person name="Delgado O."/>
            <person name="Dinh H.H."/>
            <person name="Draper H."/>
            <person name="Gonzalez-Garay M.L."/>
            <person name="Havlak P."/>
            <person name="Jackson L.R."/>
            <person name="Jacob L.S."/>
            <person name="Kelly S.H."/>
            <person name="Li L."/>
            <person name="Li Z."/>
            <person name="Liu J."/>
            <person name="Liu W."/>
            <person name="Lu J."/>
            <person name="Maheshwari M."/>
            <person name="Nguyen B.-V."/>
            <person name="Okwuonu G.O."/>
            <person name="Pasternak S."/>
            <person name="Perez L.M."/>
            <person name="Plopper F.J.H."/>
            <person name="Santibanez J."/>
            <person name="Shen H."/>
            <person name="Tabor P.E."/>
            <person name="Verduzco D."/>
            <person name="Waldron L."/>
            <person name="Wang Q."/>
            <person name="Williams G.A."/>
            <person name="Zhang J."/>
            <person name="Zhou J."/>
            <person name="Allen C.C."/>
            <person name="Amin A.G."/>
            <person name="Anyalebechi V."/>
            <person name="Bailey M."/>
            <person name="Barbaria J.A."/>
            <person name="Bimage K.E."/>
            <person name="Bryant N.P."/>
            <person name="Burch P.E."/>
            <person name="Burkett C.E."/>
            <person name="Burrell K.L."/>
            <person name="Calderon E."/>
            <person name="Cardenas V."/>
            <person name="Carter K."/>
            <person name="Casias K."/>
            <person name="Cavazos I."/>
            <person name="Cavazos S.R."/>
            <person name="Ceasar H."/>
            <person name="Chacko J."/>
            <person name="Chan S.N."/>
            <person name="Chavez D."/>
            <person name="Christopoulos C."/>
            <person name="Chu J."/>
            <person name="Cockrell R."/>
            <person name="Cox C.D."/>
            <person name="Dang M."/>
            <person name="Dathorne S.R."/>
            <person name="David R."/>
            <person name="Davis C.M."/>
            <person name="Davy-Carroll L."/>
            <person name="Deshazo D.R."/>
            <person name="Donlin J.E."/>
            <person name="D'Souza L."/>
            <person name="Eaves K.A."/>
            <person name="Egan A."/>
            <person name="Emery-Cohen A.J."/>
            <person name="Escotto M."/>
            <person name="Flagg N."/>
            <person name="Forbes L.D."/>
            <person name="Gabisi A.M."/>
            <person name="Garza M."/>
            <person name="Hamilton C."/>
            <person name="Henderson N."/>
            <person name="Hernandez O."/>
            <person name="Hines S."/>
            <person name="Hogues M.E."/>
            <person name="Huang M."/>
            <person name="Idlebird D.G."/>
            <person name="Johnson R."/>
            <person name="Jolivet A."/>
            <person name="Jones S."/>
            <person name="Kagan R."/>
            <person name="King L.M."/>
            <person name="Leal B."/>
            <person name="Lebow H."/>
            <person name="Lee S."/>
            <person name="LeVan J.M."/>
            <person name="Lewis L.C."/>
            <person name="London P."/>
            <person name="Lorensuhewa L.M."/>
            <person name="Loulseged H."/>
            <person name="Lovett D.A."/>
            <person name="Lucier A."/>
            <person name="Lucier R.L."/>
            <person name="Ma J."/>
            <person name="Madu R.C."/>
            <person name="Mapua P."/>
            <person name="Martindale A.D."/>
            <person name="Martinez E."/>
            <person name="Massey E."/>
            <person name="Mawhiney S."/>
            <person name="Meador M.G."/>
            <person name="Mendez S."/>
            <person name="Mercado C."/>
            <person name="Mercado I.C."/>
            <person name="Merritt C.E."/>
            <person name="Miner Z.L."/>
            <person name="Minja E."/>
            <person name="Mitchell T."/>
            <person name="Mohabbat F."/>
            <person name="Mohabbat K."/>
            <person name="Montgomery B."/>
            <person name="Moore N."/>
            <person name="Morris S."/>
            <person name="Munidasa M."/>
            <person name="Ngo R.N."/>
            <person name="Nguyen N.B."/>
            <person name="Nickerson E."/>
            <person name="Nwaokelemeh O.O."/>
            <person name="Nwokenkwo S."/>
            <person name="Obregon M."/>
            <person name="Oguh M."/>
            <person name="Oragunye N."/>
            <person name="Oviedo R.J."/>
            <person name="Parish B.J."/>
            <person name="Parker D.N."/>
            <person name="Parrish J."/>
            <person name="Parks K.L."/>
            <person name="Paul H.A."/>
            <person name="Payton B.A."/>
            <person name="Perez A."/>
            <person name="Perrin W."/>
            <person name="Pickens A."/>
            <person name="Primus E.L."/>
            <person name="Pu L.-L."/>
            <person name="Puazo M."/>
            <person name="Quiles M.M."/>
            <person name="Quiroz J.B."/>
            <person name="Rabata D."/>
            <person name="Reeves K."/>
            <person name="Ruiz S.J."/>
            <person name="Shao H."/>
            <person name="Sisson I."/>
            <person name="Sonaike T."/>
            <person name="Sorelle R.P."/>
            <person name="Sutton A.E."/>
            <person name="Svatek A.F."/>
            <person name="Svetz L.A."/>
            <person name="Tamerisa K.S."/>
            <person name="Taylor T.R."/>
            <person name="Teague B."/>
            <person name="Thomas N."/>
            <person name="Thorn R.D."/>
            <person name="Trejos Z.Y."/>
            <person name="Trevino B.K."/>
            <person name="Ukegbu O.N."/>
            <person name="Urban J.B."/>
            <person name="Vasquez L.I."/>
            <person name="Vera V.A."/>
            <person name="Villasana D.M."/>
            <person name="Wang L."/>
            <person name="Ward-Moore S."/>
            <person name="Warren J.T."/>
            <person name="Wei X."/>
            <person name="White F."/>
            <person name="Williamson A.L."/>
            <person name="Wleczyk R."/>
            <person name="Wooden H.S."/>
            <person name="Wooden S.H."/>
            <person name="Yen J."/>
            <person name="Yoon L."/>
            <person name="Yoon V."/>
            <person name="Zorrilla S.E."/>
            <person name="Nelson D."/>
            <person name="Kucherlapati R."/>
            <person name="Weinstock G."/>
            <person name="Gibbs R.A."/>
        </authorList>
    </citation>
    <scope>NUCLEOTIDE SEQUENCE [LARGE SCALE GENOMIC DNA]</scope>
</reference>
<reference key="5">
    <citation type="submission" date="2005-07" db="EMBL/GenBank/DDBJ databases">
        <authorList>
            <person name="Mural R.J."/>
            <person name="Istrail S."/>
            <person name="Sutton G.G."/>
            <person name="Florea L."/>
            <person name="Halpern A.L."/>
            <person name="Mobarry C.M."/>
            <person name="Lippert R."/>
            <person name="Walenz B."/>
            <person name="Shatkay H."/>
            <person name="Dew I."/>
            <person name="Miller J.R."/>
            <person name="Flanigan M.J."/>
            <person name="Edwards N.J."/>
            <person name="Bolanos R."/>
            <person name="Fasulo D."/>
            <person name="Halldorsson B.V."/>
            <person name="Hannenhalli S."/>
            <person name="Turner R."/>
            <person name="Yooseph S."/>
            <person name="Lu F."/>
            <person name="Nusskern D.R."/>
            <person name="Shue B.C."/>
            <person name="Zheng X.H."/>
            <person name="Zhong F."/>
            <person name="Delcher A.L."/>
            <person name="Huson D.H."/>
            <person name="Kravitz S.A."/>
            <person name="Mouchard L."/>
            <person name="Reinert K."/>
            <person name="Remington K.A."/>
            <person name="Clark A.G."/>
            <person name="Waterman M.S."/>
            <person name="Eichler E.E."/>
            <person name="Adams M.D."/>
            <person name="Hunkapiller M.W."/>
            <person name="Myers E.W."/>
            <person name="Venter J.C."/>
        </authorList>
    </citation>
    <scope>NUCLEOTIDE SEQUENCE [LARGE SCALE GENOMIC DNA]</scope>
</reference>
<reference key="6">
    <citation type="journal article" date="2004" name="Genome Res.">
        <title>The status, quality, and expansion of the NIH full-length cDNA project: the Mammalian Gene Collection (MGC).</title>
        <authorList>
            <consortium name="The MGC Project Team"/>
        </authorList>
    </citation>
    <scope>NUCLEOTIDE SEQUENCE [LARGE SCALE MRNA]</scope>
</reference>
<reference key="7">
    <citation type="journal article" date="1982" name="Eur. J. Biochem.">
        <title>Studies on prophospholipase A2 and its enzyme from human pancreatic juice. Catalytic properties and sequence of the N-terminal region.</title>
        <authorList>
            <person name="Grataroli R."/>
            <person name="Dijkman R."/>
            <person name="Dutilh C.E."/>
            <person name="van der Ouderaa F."/>
            <person name="de Haas G.H."/>
            <person name="Figarella C."/>
        </authorList>
    </citation>
    <scope>PROTEIN SEQUENCE OF 16-22</scope>
    <source>
        <tissue>Pancreas</tissue>
    </source>
</reference>
<reference key="8">
    <citation type="journal article" date="1983" name="Biochim. Biophys. Acta">
        <title>The complete primary structure of phospholipase A2 from human pancreas.</title>
        <authorList>
            <person name="Verheij H.M."/>
            <person name="Westerman J."/>
            <person name="Sternby B."/>
            <person name="de Haas G.H."/>
        </authorList>
    </citation>
    <scope>PROTEIN SEQUENCE OF 23-148</scope>
    <scope>PROTEOLYTIC CLEAVAGE</scope>
    <source>
        <tissue>Pancreas</tissue>
    </source>
</reference>
<reference key="9">
    <citation type="journal article" date="1992" name="Biochim. Biophys. Acta">
        <title>Characterization of recombinant human and rat pancreatic phospholipases A2 secreted from Saccharomyces cerevisiae: difference in proteolytic processing.</title>
        <authorList>
            <person name="Kanda A."/>
            <person name="Tamaki M."/>
            <person name="Nakamura E."/>
            <person name="Teraoka H."/>
            <person name="Yoshida N."/>
        </authorList>
    </citation>
    <scope>FUNCTION</scope>
    <scope>CATALYTIC ACTIVITY</scope>
</reference>
<reference key="10">
    <citation type="journal article" date="1995" name="J. Biol. Chem.">
        <title>The human 180-kDa receptor for secretory phospholipases A2. Molecular cloning, identification of a secreted soluble form, expression, and chromosomal localization.</title>
        <authorList>
            <person name="Ancian P."/>
            <person name="Lambeau G."/>
            <person name="Mattei M.-G."/>
            <person name="Lazdunski M."/>
        </authorList>
    </citation>
    <scope>FUNCTION</scope>
    <scope>INTERACTION WITH PLA2R1</scope>
</reference>
<reference key="11">
    <citation type="journal article" date="2000" name="J. Biol. Chem.">
        <title>Structures, enzymatic properties, and expression of novel human and mouse secretory phospholipase A(2)s.</title>
        <authorList>
            <person name="Suzuki N."/>
            <person name="Ishizaki J."/>
            <person name="Yokota Y."/>
            <person name="Higashino K."/>
            <person name="Ono T."/>
            <person name="Ikeda M."/>
            <person name="Fujii N."/>
            <person name="Kawamoto K."/>
            <person name="Hanasaki K."/>
        </authorList>
    </citation>
    <scope>FUNCTION</scope>
    <scope>CATALYTIC ACTIVITY</scope>
    <scope>TISSUE SPECIFICITY</scope>
</reference>
<reference key="12">
    <citation type="journal article" date="2007" name="Biochim. Biophys. Acta">
        <title>Role of 57-72 loop in the allosteric action of bile salts on pancreatic IB phospholipase A(2): regulation of fat and cholesterol homeostasis.</title>
        <authorList>
            <person name="Yu B.Z."/>
            <person name="Apitz-Castro R.J."/>
            <person name="Jain M.K."/>
            <person name="Berg O.G."/>
        </authorList>
    </citation>
    <scope>FUNCTION</scope>
    <scope>CATALYTIC ACTIVITY</scope>
    <scope>ACTIVITY REGULATION</scope>
</reference>
<reference key="13">
    <citation type="journal article" date="2014" name="Sci. Rep.">
        <title>sPLA2 IB induces human podocyte apoptosis via the M-type phospholipase A2 receptor.</title>
        <authorList>
            <person name="Pan Y."/>
            <person name="Wan J."/>
            <person name="Liu Y."/>
            <person name="Yang Q."/>
            <person name="Liang W."/>
            <person name="Singhal P.C."/>
            <person name="Saleem M.A."/>
            <person name="Ding G."/>
        </authorList>
    </citation>
    <scope>FUNCTION</scope>
</reference>
<reference key="14">
    <citation type="journal article" date="2009" name="J. Biol. Chem.">
        <title>Structural insight into the activation mechanism of human pancreatic prophospholipase A2.</title>
        <authorList>
            <person name="Xu W."/>
            <person name="Yi L."/>
            <person name="Feng Y."/>
            <person name="Chen L."/>
            <person name="Liu J."/>
        </authorList>
    </citation>
    <scope>X-RAY CRYSTALLOGRAPHY (1.55 ANGSTROMS) OF 16-148</scope>
    <scope>DISULFIDE BONDS</scope>
    <scope>SUBUNIT</scope>
    <scope>AUTOPROTEOLYTIC CLEAVAGE</scope>
    <scope>SUBCELLULAR LOCATION</scope>
</reference>